<name>RIMP_YERPA</name>
<keyword id="KW-0963">Cytoplasm</keyword>
<keyword id="KW-0690">Ribosome biogenesis</keyword>
<gene>
    <name evidence="1" type="primary">rimP</name>
    <name type="ordered locus">YPA_0048</name>
</gene>
<protein>
    <recommendedName>
        <fullName evidence="1">Ribosome maturation factor RimP</fullName>
    </recommendedName>
</protein>
<dbReference type="EMBL" id="CP000308">
    <property type="protein sequence ID" value="ABG12017.1"/>
    <property type="molecule type" value="Genomic_DNA"/>
</dbReference>
<dbReference type="RefSeq" id="WP_002222054.1">
    <property type="nucleotide sequence ID" value="NZ_CP009906.1"/>
</dbReference>
<dbReference type="SMR" id="Q1CC05"/>
<dbReference type="GeneID" id="97457868"/>
<dbReference type="KEGG" id="ypa:YPA_0048"/>
<dbReference type="Proteomes" id="UP000001971">
    <property type="component" value="Chromosome"/>
</dbReference>
<dbReference type="GO" id="GO:0005829">
    <property type="term" value="C:cytosol"/>
    <property type="evidence" value="ECO:0007669"/>
    <property type="project" value="TreeGrafter"/>
</dbReference>
<dbReference type="GO" id="GO:0000028">
    <property type="term" value="P:ribosomal small subunit assembly"/>
    <property type="evidence" value="ECO:0007669"/>
    <property type="project" value="TreeGrafter"/>
</dbReference>
<dbReference type="GO" id="GO:0006412">
    <property type="term" value="P:translation"/>
    <property type="evidence" value="ECO:0007669"/>
    <property type="project" value="TreeGrafter"/>
</dbReference>
<dbReference type="CDD" id="cd01734">
    <property type="entry name" value="YlxS_C"/>
    <property type="match status" value="1"/>
</dbReference>
<dbReference type="FunFam" id="2.30.30.180:FF:000001">
    <property type="entry name" value="Ribosome maturation factor RimP"/>
    <property type="match status" value="1"/>
</dbReference>
<dbReference type="FunFam" id="3.30.300.70:FF:000001">
    <property type="entry name" value="Ribosome maturation factor RimP"/>
    <property type="match status" value="1"/>
</dbReference>
<dbReference type="Gene3D" id="2.30.30.180">
    <property type="entry name" value="Ribosome maturation factor RimP, C-terminal domain"/>
    <property type="match status" value="1"/>
</dbReference>
<dbReference type="Gene3D" id="3.30.300.70">
    <property type="entry name" value="RimP-like superfamily, N-terminal"/>
    <property type="match status" value="1"/>
</dbReference>
<dbReference type="HAMAP" id="MF_01077">
    <property type="entry name" value="RimP"/>
    <property type="match status" value="1"/>
</dbReference>
<dbReference type="InterPro" id="IPR003728">
    <property type="entry name" value="Ribosome_maturation_RimP"/>
</dbReference>
<dbReference type="InterPro" id="IPR028998">
    <property type="entry name" value="RimP_C"/>
</dbReference>
<dbReference type="InterPro" id="IPR036847">
    <property type="entry name" value="RimP_C_sf"/>
</dbReference>
<dbReference type="InterPro" id="IPR028989">
    <property type="entry name" value="RimP_N"/>
</dbReference>
<dbReference type="InterPro" id="IPR035956">
    <property type="entry name" value="RimP_N_sf"/>
</dbReference>
<dbReference type="NCBIfam" id="NF000927">
    <property type="entry name" value="PRK00092.1-1"/>
    <property type="match status" value="1"/>
</dbReference>
<dbReference type="PANTHER" id="PTHR33867">
    <property type="entry name" value="RIBOSOME MATURATION FACTOR RIMP"/>
    <property type="match status" value="1"/>
</dbReference>
<dbReference type="PANTHER" id="PTHR33867:SF1">
    <property type="entry name" value="RIBOSOME MATURATION FACTOR RIMP"/>
    <property type="match status" value="1"/>
</dbReference>
<dbReference type="Pfam" id="PF17384">
    <property type="entry name" value="DUF150_C"/>
    <property type="match status" value="1"/>
</dbReference>
<dbReference type="Pfam" id="PF02576">
    <property type="entry name" value="RimP_N"/>
    <property type="match status" value="1"/>
</dbReference>
<dbReference type="SUPFAM" id="SSF74942">
    <property type="entry name" value="YhbC-like, C-terminal domain"/>
    <property type="match status" value="1"/>
</dbReference>
<dbReference type="SUPFAM" id="SSF75420">
    <property type="entry name" value="YhbC-like, N-terminal domain"/>
    <property type="match status" value="1"/>
</dbReference>
<sequence length="150" mass="16701">MSTLEQKLTEIISAPVEALGYELVGIEFIRGRQSTLRIYIDSDDGITVDACADVSHQVSAVLDVEDPITVAYNLEVSSPGLDRPMFTAEHYTRYLGEEVTLVLRMAMQNRRKWQGIIKAVDGEMITVTVDGKDEVFALSNIQKANLVPHF</sequence>
<proteinExistence type="inferred from homology"/>
<organism>
    <name type="scientific">Yersinia pestis bv. Antiqua (strain Antiqua)</name>
    <dbReference type="NCBI Taxonomy" id="360102"/>
    <lineage>
        <taxon>Bacteria</taxon>
        <taxon>Pseudomonadati</taxon>
        <taxon>Pseudomonadota</taxon>
        <taxon>Gammaproteobacteria</taxon>
        <taxon>Enterobacterales</taxon>
        <taxon>Yersiniaceae</taxon>
        <taxon>Yersinia</taxon>
    </lineage>
</organism>
<reference key="1">
    <citation type="journal article" date="2006" name="J. Bacteriol.">
        <title>Complete genome sequence of Yersinia pestis strains Antiqua and Nepal516: evidence of gene reduction in an emerging pathogen.</title>
        <authorList>
            <person name="Chain P.S.G."/>
            <person name="Hu P."/>
            <person name="Malfatti S.A."/>
            <person name="Radnedge L."/>
            <person name="Larimer F."/>
            <person name="Vergez L.M."/>
            <person name="Worsham P."/>
            <person name="Chu M.C."/>
            <person name="Andersen G.L."/>
        </authorList>
    </citation>
    <scope>NUCLEOTIDE SEQUENCE [LARGE SCALE GENOMIC DNA]</scope>
    <source>
        <strain>Antiqua</strain>
    </source>
</reference>
<comment type="function">
    <text evidence="1">Required for maturation of 30S ribosomal subunits.</text>
</comment>
<comment type="subcellular location">
    <subcellularLocation>
        <location evidence="1">Cytoplasm</location>
    </subcellularLocation>
</comment>
<comment type="similarity">
    <text evidence="1">Belongs to the RimP family.</text>
</comment>
<feature type="chain" id="PRO_0000384809" description="Ribosome maturation factor RimP">
    <location>
        <begin position="1"/>
        <end position="150"/>
    </location>
</feature>
<accession>Q1CC05</accession>
<evidence type="ECO:0000255" key="1">
    <source>
        <dbReference type="HAMAP-Rule" id="MF_01077"/>
    </source>
</evidence>